<accession>Q5DRB4</accession>
<proteinExistence type="inferred from homology"/>
<reference key="1">
    <citation type="journal article" date="2005" name="Nature">
        <title>Initial sequence of the chimpanzee genome and comparison with the human genome.</title>
        <authorList>
            <consortium name="Chimpanzee sequencing and analysis consortium"/>
        </authorList>
    </citation>
    <scope>NUCLEOTIDE SEQUENCE [LARGE SCALE GENOMIC DNA]</scope>
</reference>
<reference key="2">
    <citation type="journal article" date="2005" name="Genetics">
        <title>Comparative genomics and diversifying selection of the clustered vertebrate protocadherin genes.</title>
        <authorList>
            <person name="Wu Q."/>
        </authorList>
    </citation>
    <scope>IDENTIFICATION</scope>
</reference>
<organism>
    <name type="scientific">Pan troglodytes</name>
    <name type="common">Chimpanzee</name>
    <dbReference type="NCBI Taxonomy" id="9598"/>
    <lineage>
        <taxon>Eukaryota</taxon>
        <taxon>Metazoa</taxon>
        <taxon>Chordata</taxon>
        <taxon>Craniata</taxon>
        <taxon>Vertebrata</taxon>
        <taxon>Euteleostomi</taxon>
        <taxon>Mammalia</taxon>
        <taxon>Eutheria</taxon>
        <taxon>Euarchontoglires</taxon>
        <taxon>Primates</taxon>
        <taxon>Haplorrhini</taxon>
        <taxon>Catarrhini</taxon>
        <taxon>Hominidae</taxon>
        <taxon>Pan</taxon>
    </lineage>
</organism>
<evidence type="ECO:0000250" key="1"/>
<evidence type="ECO:0000255" key="2"/>
<evidence type="ECO:0000255" key="3">
    <source>
        <dbReference type="PROSITE-ProRule" id="PRU00043"/>
    </source>
</evidence>
<evidence type="ECO:0000256" key="4">
    <source>
        <dbReference type="SAM" id="MobiDB-lite"/>
    </source>
</evidence>
<gene>
    <name type="primary">PCDHGA6</name>
</gene>
<name>PCDG6_PANTR</name>
<feature type="signal peptide" evidence="2">
    <location>
        <begin position="1"/>
        <end position="29"/>
    </location>
</feature>
<feature type="chain" id="PRO_0000003959" description="Protocadherin gamma-A6">
    <location>
        <begin position="30"/>
        <end position="932"/>
    </location>
</feature>
<feature type="topological domain" description="Extracellular" evidence="2">
    <location>
        <begin position="30"/>
        <end position="692"/>
    </location>
</feature>
<feature type="transmembrane region" description="Helical" evidence="2">
    <location>
        <begin position="693"/>
        <end position="713"/>
    </location>
</feature>
<feature type="topological domain" description="Cytoplasmic" evidence="2">
    <location>
        <begin position="714"/>
        <end position="932"/>
    </location>
</feature>
<feature type="domain" description="Cadherin 1" evidence="3">
    <location>
        <begin position="30"/>
        <end position="133"/>
    </location>
</feature>
<feature type="domain" description="Cadherin 2" evidence="3">
    <location>
        <begin position="134"/>
        <end position="242"/>
    </location>
</feature>
<feature type="domain" description="Cadherin 3" evidence="3">
    <location>
        <begin position="243"/>
        <end position="347"/>
    </location>
</feature>
<feature type="domain" description="Cadherin 4" evidence="3">
    <location>
        <begin position="348"/>
        <end position="452"/>
    </location>
</feature>
<feature type="domain" description="Cadherin 5" evidence="3">
    <location>
        <begin position="453"/>
        <end position="562"/>
    </location>
</feature>
<feature type="domain" description="Cadherin 6" evidence="3">
    <location>
        <begin position="570"/>
        <end position="682"/>
    </location>
</feature>
<feature type="region of interest" description="Disordered" evidence="4">
    <location>
        <begin position="803"/>
        <end position="841"/>
    </location>
</feature>
<feature type="region of interest" description="Disordered" evidence="4">
    <location>
        <begin position="902"/>
        <end position="932"/>
    </location>
</feature>
<feature type="compositionally biased region" description="Polar residues" evidence="4">
    <location>
        <begin position="806"/>
        <end position="841"/>
    </location>
</feature>
<feature type="compositionally biased region" description="Basic residues" evidence="4">
    <location>
        <begin position="922"/>
        <end position="932"/>
    </location>
</feature>
<feature type="glycosylation site" description="N-linked (GlcNAc...) asparagine" evidence="2">
    <location>
        <position position="81"/>
    </location>
</feature>
<feature type="glycosylation site" description="N-linked (GlcNAc...) asparagine" evidence="2">
    <location>
        <position position="419"/>
    </location>
</feature>
<feature type="glycosylation site" description="N-linked (GlcNAc...) asparagine" evidence="2">
    <location>
        <position position="545"/>
    </location>
</feature>
<feature type="glycosylation site" description="N-linked (GlcNAc...) asparagine" evidence="2">
    <location>
        <position position="685"/>
    </location>
</feature>
<sequence>MAPPQRHPQRSEQVLLLTLLGTLWGAAAAQIRYSIPEELEKGSFVGNIVKDLGLEPQELAEHGVRIVSRGRMQLFSLNPRNGSLVTAGRIDREELCAQSPRCLVSFNILVEDKLNLYPVEVEIVDINDNTPRFLKEELEVKILENAAPSSRFPLMEVYDPDVGMNSLQGFKLSGNSYFSVDVQSEAHGPKYPELVLEGTLDREGEAVYRLVLTAMDGGDPVRSSIAQILVTVLDVNDNTPVFTQPVYRVSVPENLPVGTPVLAVTATDQDEGVHGEVTYSFVKITEKISQIFCLNVLTGEISTSANLDYEDSSFYELGVEARDGPGLRDRAKVLITILDVNDNVPEVVVTSGSRTIAESAPPGTVIALFQVFDRDSGLNGLVTCSIPRSLPFELEKSVGNYYRLVTNAALDREEVFLYNITVTATDKGTPPLSTETIISLNVADTNDNPPTFPHSSYSVYVLENNPRGASIFSVNALDPDVDQNAQVSYSLAEDTLQGAPLSSYVSINSDTGILYALRSFDYEQLRDLQLWVTASDSGDPPLSSNVSLSLFVLDQNDNAPEILYPALPTDGSTGVELAPRSAEPGYLVTKVVAVDRDSGQNAWLSYRLLKASEPGLFSVGLHTGEVRTARALLDRDALKQSLVVAVQDHGQPPLSATVTLTVAVADRIPDILADLGSLEPSAKPNDSDLTLYLVVAVAAVSCVFLAFVIVLLALRLQRWHKSRLLQASGGGLASMPGSHFVGVDGVRAFLQTYSHEVSLTADSRKSHLIFPQPNYADTLINQESYEKSEPLLITQDLLETKGDPRQLQQAPPNTDWRFSQAQRPGTSGSQNGDDTGTWPNNQFDTEMLQAMILASASEAADGSSTLGGGAGTMGLSARYGPQFTLQHVPDYRQNVYIPGSNATLTNAAGKRDGKAPAGGNGNKKKSGKKEKK</sequence>
<dbReference type="SMR" id="Q5DRB4"/>
<dbReference type="FunCoup" id="Q5DRB4">
    <property type="interactions" value="9"/>
</dbReference>
<dbReference type="GlyCosmos" id="Q5DRB4">
    <property type="glycosylation" value="4 sites, No reported glycans"/>
</dbReference>
<dbReference type="InParanoid" id="Q5DRB4"/>
<dbReference type="Proteomes" id="UP000002277">
    <property type="component" value="Unplaced"/>
</dbReference>
<dbReference type="GO" id="GO:0005886">
    <property type="term" value="C:plasma membrane"/>
    <property type="evidence" value="ECO:0000318"/>
    <property type="project" value="GO_Central"/>
</dbReference>
<dbReference type="GO" id="GO:0005509">
    <property type="term" value="F:calcium ion binding"/>
    <property type="evidence" value="ECO:0007669"/>
    <property type="project" value="InterPro"/>
</dbReference>
<dbReference type="GO" id="GO:0007155">
    <property type="term" value="P:cell adhesion"/>
    <property type="evidence" value="ECO:0000318"/>
    <property type="project" value="GO_Central"/>
</dbReference>
<dbReference type="GO" id="GO:0007156">
    <property type="term" value="P:homophilic cell adhesion via plasma membrane adhesion molecules"/>
    <property type="evidence" value="ECO:0007669"/>
    <property type="project" value="InterPro"/>
</dbReference>
<dbReference type="GO" id="GO:0007399">
    <property type="term" value="P:nervous system development"/>
    <property type="evidence" value="ECO:0007669"/>
    <property type="project" value="UniProtKB-ARBA"/>
</dbReference>
<dbReference type="CDD" id="cd11304">
    <property type="entry name" value="Cadherin_repeat"/>
    <property type="match status" value="6"/>
</dbReference>
<dbReference type="FunFam" id="2.60.40.60:FF:000004">
    <property type="entry name" value="Protocadherin 1 gamma 2"/>
    <property type="match status" value="1"/>
</dbReference>
<dbReference type="FunFam" id="2.60.40.60:FF:000001">
    <property type="entry name" value="Protocadherin alpha 2"/>
    <property type="match status" value="1"/>
</dbReference>
<dbReference type="FunFam" id="2.60.40.60:FF:000002">
    <property type="entry name" value="Protocadherin alpha 2"/>
    <property type="match status" value="1"/>
</dbReference>
<dbReference type="FunFam" id="2.60.40.60:FF:000006">
    <property type="entry name" value="Protocadherin alpha 2"/>
    <property type="match status" value="1"/>
</dbReference>
<dbReference type="FunFam" id="2.60.40.60:FF:000129">
    <property type="entry name" value="protocadherin alpha-C2 isoform X1"/>
    <property type="match status" value="1"/>
</dbReference>
<dbReference type="FunFam" id="2.60.40.60:FF:000018">
    <property type="entry name" value="Protocadherin gamma c3"/>
    <property type="match status" value="1"/>
</dbReference>
<dbReference type="Gene3D" id="2.60.40.60">
    <property type="entry name" value="Cadherins"/>
    <property type="match status" value="6"/>
</dbReference>
<dbReference type="InterPro" id="IPR002126">
    <property type="entry name" value="Cadherin-like_dom"/>
</dbReference>
<dbReference type="InterPro" id="IPR015919">
    <property type="entry name" value="Cadherin-like_sf"/>
</dbReference>
<dbReference type="InterPro" id="IPR032455">
    <property type="entry name" value="Cadherin_C"/>
</dbReference>
<dbReference type="InterPro" id="IPR031904">
    <property type="entry name" value="Cadherin_CBD"/>
</dbReference>
<dbReference type="InterPro" id="IPR020894">
    <property type="entry name" value="Cadherin_CS"/>
</dbReference>
<dbReference type="InterPro" id="IPR013164">
    <property type="entry name" value="Cadherin_N"/>
</dbReference>
<dbReference type="InterPro" id="IPR050174">
    <property type="entry name" value="Protocadherin/Cadherin-CA"/>
</dbReference>
<dbReference type="PANTHER" id="PTHR24028">
    <property type="entry name" value="CADHERIN-87A"/>
    <property type="match status" value="1"/>
</dbReference>
<dbReference type="PANTHER" id="PTHR24028:SF107">
    <property type="entry name" value="PROTOCADHERIN GAMMA-A6"/>
    <property type="match status" value="1"/>
</dbReference>
<dbReference type="Pfam" id="PF00028">
    <property type="entry name" value="Cadherin"/>
    <property type="match status" value="5"/>
</dbReference>
<dbReference type="Pfam" id="PF08266">
    <property type="entry name" value="Cadherin_2"/>
    <property type="match status" value="1"/>
</dbReference>
<dbReference type="Pfam" id="PF16492">
    <property type="entry name" value="Cadherin_C_2"/>
    <property type="match status" value="1"/>
</dbReference>
<dbReference type="Pfam" id="PF15974">
    <property type="entry name" value="Cadherin_tail"/>
    <property type="match status" value="1"/>
</dbReference>
<dbReference type="PRINTS" id="PR00205">
    <property type="entry name" value="CADHERIN"/>
</dbReference>
<dbReference type="SMART" id="SM00112">
    <property type="entry name" value="CA"/>
    <property type="match status" value="6"/>
</dbReference>
<dbReference type="SUPFAM" id="SSF49313">
    <property type="entry name" value="Cadherin-like"/>
    <property type="match status" value="6"/>
</dbReference>
<dbReference type="PROSITE" id="PS00232">
    <property type="entry name" value="CADHERIN_1"/>
    <property type="match status" value="5"/>
</dbReference>
<dbReference type="PROSITE" id="PS50268">
    <property type="entry name" value="CADHERIN_2"/>
    <property type="match status" value="6"/>
</dbReference>
<protein>
    <recommendedName>
        <fullName>Protocadherin gamma-A6</fullName>
        <shortName>PCDH-gamma-A6</shortName>
    </recommendedName>
</protein>
<comment type="function">
    <text>Potential calcium-dependent cell-adhesion protein. May be involved in the establishment and maintenance of specific neuronal connections in the brain.</text>
</comment>
<comment type="subcellular location">
    <subcellularLocation>
        <location evidence="1">Cell membrane</location>
        <topology evidence="1">Single-pass type I membrane protein</topology>
    </subcellularLocation>
</comment>
<keyword id="KW-0106">Calcium</keyword>
<keyword id="KW-0130">Cell adhesion</keyword>
<keyword id="KW-1003">Cell membrane</keyword>
<keyword id="KW-0325">Glycoprotein</keyword>
<keyword id="KW-0472">Membrane</keyword>
<keyword id="KW-1185">Reference proteome</keyword>
<keyword id="KW-0677">Repeat</keyword>
<keyword id="KW-0732">Signal</keyword>
<keyword id="KW-0812">Transmembrane</keyword>
<keyword id="KW-1133">Transmembrane helix</keyword>